<feature type="propeptide" id="PRO_0000029283" evidence="2">
    <location>
        <begin position="1"/>
        <end position="11"/>
    </location>
</feature>
<feature type="chain" id="PRO_0000029284" description="Amidophosphoribosyltransferase">
    <location>
        <begin position="12"/>
        <end position="517"/>
    </location>
</feature>
<feature type="domain" description="Glutamine amidotransferase type-2" evidence="3">
    <location>
        <begin position="12"/>
        <end position="261"/>
    </location>
</feature>
<feature type="active site" description="Nucleophile" evidence="3">
    <location>
        <position position="12"/>
    </location>
</feature>
<feature type="binding site" evidence="1">
    <location>
        <position position="280"/>
    </location>
    <ligand>
        <name>[4Fe-4S] cluster</name>
        <dbReference type="ChEBI" id="CHEBI:49883"/>
    </ligand>
</feature>
<feature type="binding site" evidence="1">
    <location>
        <position position="327"/>
    </location>
    <ligand>
        <name>Mg(2+)</name>
        <dbReference type="ChEBI" id="CHEBI:18420"/>
    </ligand>
</feature>
<feature type="binding site" evidence="1">
    <location>
        <position position="389"/>
    </location>
    <ligand>
        <name>Mg(2+)</name>
        <dbReference type="ChEBI" id="CHEBI:18420"/>
    </ligand>
</feature>
<feature type="binding site" evidence="1">
    <location>
        <position position="390"/>
    </location>
    <ligand>
        <name>Mg(2+)</name>
        <dbReference type="ChEBI" id="CHEBI:18420"/>
    </ligand>
</feature>
<feature type="binding site" evidence="1">
    <location>
        <position position="426"/>
    </location>
    <ligand>
        <name>[4Fe-4S] cluster</name>
        <dbReference type="ChEBI" id="CHEBI:49883"/>
    </ligand>
</feature>
<feature type="binding site" evidence="1">
    <location>
        <position position="503"/>
    </location>
    <ligand>
        <name>[4Fe-4S] cluster</name>
        <dbReference type="ChEBI" id="CHEBI:49883"/>
    </ligand>
</feature>
<feature type="binding site" evidence="1">
    <location>
        <position position="506"/>
    </location>
    <ligand>
        <name>[4Fe-4S] cluster</name>
        <dbReference type="ChEBI" id="CHEBI:49883"/>
    </ligand>
</feature>
<feature type="modified residue" description="N-acetylmethionine" evidence="8">
    <location>
        <position position="1"/>
    </location>
</feature>
<feature type="sequence conflict" description="In Ref. 2; AAC27345." evidence="7" ref="2">
    <original>V</original>
    <variation>I</variation>
    <location>
        <position position="369"/>
    </location>
</feature>
<protein>
    <recommendedName>
        <fullName evidence="6">Amidophosphoribosyltransferase</fullName>
        <shortName>ATase</shortName>
        <ecNumber>2.4.2.14</ecNumber>
    </recommendedName>
    <alternativeName>
        <fullName evidence="5">Glutamine phosphoribosylpyrophosphate amidotransferase</fullName>
        <shortName evidence="5">GPAT</shortName>
    </alternativeName>
</protein>
<proteinExistence type="evidence at protein level"/>
<organism>
    <name type="scientific">Homo sapiens</name>
    <name type="common">Human</name>
    <dbReference type="NCBI Taxonomy" id="9606"/>
    <lineage>
        <taxon>Eukaryota</taxon>
        <taxon>Metazoa</taxon>
        <taxon>Chordata</taxon>
        <taxon>Craniata</taxon>
        <taxon>Vertebrata</taxon>
        <taxon>Euteleostomi</taxon>
        <taxon>Mammalia</taxon>
        <taxon>Eutheria</taxon>
        <taxon>Euarchontoglires</taxon>
        <taxon>Primates</taxon>
        <taxon>Haplorrhini</taxon>
        <taxon>Catarrhini</taxon>
        <taxon>Hominidae</taxon>
        <taxon>Homo</taxon>
    </lineage>
</organism>
<reference key="1">
    <citation type="journal article" date="1993" name="Biochem. Biophys. Res. Commun.">
        <title>Molecular cloning of human amidophosphoribosyltransferase.</title>
        <authorList>
            <person name="Iwahana H."/>
            <person name="Oka J."/>
            <person name="Mizusawa N."/>
            <person name="Kudo E."/>
            <person name="Ii S."/>
            <person name="Yoshimoto K."/>
            <person name="Holmes E.W."/>
            <person name="Itakura M."/>
        </authorList>
    </citation>
    <scope>NUCLEOTIDE SEQUENCE [MRNA]</scope>
    <scope>TISSUE SPECIFICITY</scope>
    <source>
        <tissue>Hepatoma</tissue>
    </source>
</reference>
<reference key="2">
    <citation type="journal article" date="1994" name="J. Biol. Chem.">
        <title>Two genes for de novo purine nucleotide synthesis on human chromosome 4 are closely linked and divergently transcribed.</title>
        <authorList>
            <person name="Brayton K.A."/>
            <person name="Chen Z."/>
            <person name="Zhou G."/>
            <person name="Nagy P.L."/>
            <person name="Gavalas A."/>
            <person name="Trent J.M."/>
            <person name="Deaven L.L."/>
            <person name="Dixon J.E."/>
            <person name="Zalkin H."/>
        </authorList>
    </citation>
    <scope>NUCLEOTIDE SEQUENCE [GENOMIC DNA / MRNA]</scope>
</reference>
<reference key="3">
    <citation type="journal article" date="2004" name="Genome Res.">
        <title>The status, quality, and expansion of the NIH full-length cDNA project: the Mammalian Gene Collection (MGC).</title>
        <authorList>
            <consortium name="The MGC Project Team"/>
        </authorList>
    </citation>
    <scope>NUCLEOTIDE SEQUENCE [LARGE SCALE MRNA]</scope>
    <source>
        <tissue>Muscle</tissue>
    </source>
</reference>
<reference key="4">
    <citation type="journal article" date="2011" name="BMC Syst. Biol.">
        <title>Initial characterization of the human central proteome.</title>
        <authorList>
            <person name="Burkard T.R."/>
            <person name="Planyavsky M."/>
            <person name="Kaupe I."/>
            <person name="Breitwieser F.P."/>
            <person name="Buerckstuemmer T."/>
            <person name="Bennett K.L."/>
            <person name="Superti-Furga G."/>
            <person name="Colinge J."/>
        </authorList>
    </citation>
    <scope>IDENTIFICATION BY MASS SPECTROMETRY [LARGE SCALE ANALYSIS]</scope>
</reference>
<reference key="5">
    <citation type="journal article" date="2012" name="Proc. Natl. Acad. Sci. U.S.A.">
        <title>N-terminal acetylome analyses and functional insights of the N-terminal acetyltransferase NatB.</title>
        <authorList>
            <person name="Van Damme P."/>
            <person name="Lasa M."/>
            <person name="Polevoda B."/>
            <person name="Gazquez C."/>
            <person name="Elosegui-Artola A."/>
            <person name="Kim D.S."/>
            <person name="De Juan-Pardo E."/>
            <person name="Demeyer K."/>
            <person name="Hole K."/>
            <person name="Larrea E."/>
            <person name="Timmerman E."/>
            <person name="Prieto J."/>
            <person name="Arnesen T."/>
            <person name="Sherman F."/>
            <person name="Gevaert K."/>
            <person name="Aldabe R."/>
        </authorList>
    </citation>
    <scope>ACETYLATION [LARGE SCALE ANALYSIS] AT MET-1</scope>
    <scope>IDENTIFICATION BY MASS SPECTROMETRY [LARGE SCALE ANALYSIS]</scope>
</reference>
<evidence type="ECO:0000250" key="1">
    <source>
        <dbReference type="UniProtKB" id="P00497"/>
    </source>
</evidence>
<evidence type="ECO:0000250" key="2">
    <source>
        <dbReference type="UniProtKB" id="P35433"/>
    </source>
</evidence>
<evidence type="ECO:0000255" key="3">
    <source>
        <dbReference type="PROSITE-ProRule" id="PRU00609"/>
    </source>
</evidence>
<evidence type="ECO:0000269" key="4">
    <source>
    </source>
</evidence>
<evidence type="ECO:0000303" key="5">
    <source>
    </source>
</evidence>
<evidence type="ECO:0000303" key="6">
    <source>
    </source>
</evidence>
<evidence type="ECO:0000305" key="7"/>
<evidence type="ECO:0007744" key="8">
    <source>
    </source>
</evidence>
<gene>
    <name type="primary">PPAT</name>
    <name evidence="5" type="synonym">GPAT</name>
</gene>
<keyword id="KW-0004">4Fe-4S</keyword>
<keyword id="KW-0007">Acetylation</keyword>
<keyword id="KW-0021">Allosteric enzyme</keyword>
<keyword id="KW-0315">Glutamine amidotransferase</keyword>
<keyword id="KW-0328">Glycosyltransferase</keyword>
<keyword id="KW-0408">Iron</keyword>
<keyword id="KW-0411">Iron-sulfur</keyword>
<keyword id="KW-0460">Magnesium</keyword>
<keyword id="KW-0479">Metal-binding</keyword>
<keyword id="KW-1267">Proteomics identification</keyword>
<keyword id="KW-0658">Purine biosynthesis</keyword>
<keyword id="KW-1185">Reference proteome</keyword>
<keyword id="KW-0808">Transferase</keyword>
<accession>Q06203</accession>
<comment type="function">
    <text evidence="2">Catalyzes the formation of phosphoribosylamine from phosphoribosylpyrophosphate (PRPP) and glutamine.</text>
</comment>
<comment type="catalytic activity">
    <reaction evidence="2">
        <text>5-phospho-beta-D-ribosylamine + L-glutamate + diphosphate = 5-phospho-alpha-D-ribose 1-diphosphate + L-glutamine + H2O</text>
        <dbReference type="Rhea" id="RHEA:14905"/>
        <dbReference type="ChEBI" id="CHEBI:15377"/>
        <dbReference type="ChEBI" id="CHEBI:29985"/>
        <dbReference type="ChEBI" id="CHEBI:33019"/>
        <dbReference type="ChEBI" id="CHEBI:58017"/>
        <dbReference type="ChEBI" id="CHEBI:58359"/>
        <dbReference type="ChEBI" id="CHEBI:58681"/>
        <dbReference type="EC" id="2.4.2.14"/>
    </reaction>
    <physiologicalReaction direction="right-to-left" evidence="2">
        <dbReference type="Rhea" id="RHEA:14907"/>
    </physiologicalReaction>
</comment>
<comment type="cofactor">
    <cofactor evidence="1">
        <name>Mg(2+)</name>
        <dbReference type="ChEBI" id="CHEBI:18420"/>
    </cofactor>
    <text evidence="1">Binds 1 Mg(2+) ion per subunit.</text>
</comment>
<comment type="cofactor">
    <cofactor evidence="1">
        <name>[4Fe-4S] cluster</name>
        <dbReference type="ChEBI" id="CHEBI:49883"/>
    </cofactor>
    <text evidence="1">Binds 1 [4Fe-4S] cluster per subunit.</text>
</comment>
<comment type="pathway">
    <text evidence="2">Purine metabolism; IMP biosynthesis via de novo pathway; N(1)-(5-phospho-D-ribosyl)glycinamide from 5-phospho-alpha-D-ribose 1-diphosphate: step 1/2.</text>
</comment>
<comment type="subunit">
    <text evidence="1">Homotetramer.</text>
</comment>
<comment type="interaction">
    <interactant intactId="EBI-3920254">
        <id>Q06203</id>
    </interactant>
    <interactant intactId="EBI-721623">
        <id>Q9UKK9</id>
        <label>NUDT5</label>
    </interactant>
    <organismsDiffer>false</organismsDiffer>
    <experiments>3</experiments>
</comment>
<comment type="tissue specificity">
    <text evidence="4">Ubiquitously expressed.</text>
</comment>
<comment type="similarity">
    <text evidence="7">In the C-terminal section; belongs to the purine/pyrimidine phosphoribosyltransferase family.</text>
</comment>
<name>PUR1_HUMAN</name>
<dbReference type="EC" id="2.4.2.14"/>
<dbReference type="EMBL" id="D13757">
    <property type="protein sequence ID" value="BAA02903.1"/>
    <property type="molecule type" value="mRNA"/>
</dbReference>
<dbReference type="EMBL" id="U00238">
    <property type="protein sequence ID" value="AAC27345.1"/>
    <property type="molecule type" value="mRNA"/>
</dbReference>
<dbReference type="EMBL" id="U00239">
    <property type="status" value="NOT_ANNOTATED_CDS"/>
    <property type="molecule type" value="Genomic_DNA"/>
</dbReference>
<dbReference type="EMBL" id="BC004200">
    <property type="protein sequence ID" value="AAH04200.1"/>
    <property type="molecule type" value="mRNA"/>
</dbReference>
<dbReference type="CCDS" id="CCDS3505.1"/>
<dbReference type="PIR" id="A53342">
    <property type="entry name" value="A53342"/>
</dbReference>
<dbReference type="RefSeq" id="NP_002694.3">
    <property type="nucleotide sequence ID" value="NM_002703.4"/>
</dbReference>
<dbReference type="SMR" id="Q06203"/>
<dbReference type="BioGRID" id="111467">
    <property type="interactions" value="73"/>
</dbReference>
<dbReference type="CORUM" id="Q06203"/>
<dbReference type="FunCoup" id="Q06203">
    <property type="interactions" value="901"/>
</dbReference>
<dbReference type="IntAct" id="Q06203">
    <property type="interactions" value="15"/>
</dbReference>
<dbReference type="MINT" id="Q06203"/>
<dbReference type="STRING" id="9606.ENSP00000264220"/>
<dbReference type="ChEMBL" id="CHEMBL2362992"/>
<dbReference type="DrugBank" id="DB03948">
    <property type="generic name" value="6-Chloropurine Riboside, 5'-Monophosphate"/>
</dbReference>
<dbReference type="DrugBank" id="DB00993">
    <property type="generic name" value="Azathioprine"/>
</dbReference>
<dbReference type="DrugBank" id="DB01254">
    <property type="generic name" value="Dasatinib"/>
</dbReference>
<dbReference type="DrugBank" id="DB00544">
    <property type="generic name" value="Fluorouracil"/>
</dbReference>
<dbReference type="DrugBank" id="DB00130">
    <property type="generic name" value="L-Glutamine"/>
</dbReference>
<dbReference type="DrugBank" id="DB01033">
    <property type="generic name" value="Mercaptopurine"/>
</dbReference>
<dbReference type="DrugCentral" id="Q06203"/>
<dbReference type="MEROPS" id="C44.001"/>
<dbReference type="GlyGen" id="Q06203">
    <property type="glycosylation" value="2 sites, 1 O-linked glycan (1 site)"/>
</dbReference>
<dbReference type="iPTMnet" id="Q06203"/>
<dbReference type="MetOSite" id="Q06203"/>
<dbReference type="PhosphoSitePlus" id="Q06203"/>
<dbReference type="SwissPalm" id="Q06203"/>
<dbReference type="BioMuta" id="PPAT"/>
<dbReference type="DMDM" id="548638"/>
<dbReference type="jPOST" id="Q06203"/>
<dbReference type="MassIVE" id="Q06203"/>
<dbReference type="PaxDb" id="9606-ENSP00000264220"/>
<dbReference type="PeptideAtlas" id="Q06203"/>
<dbReference type="ProteomicsDB" id="58422"/>
<dbReference type="Pumba" id="Q06203"/>
<dbReference type="Antibodypedia" id="24019">
    <property type="antibodies" value="379 antibodies from 28 providers"/>
</dbReference>
<dbReference type="DNASU" id="5471"/>
<dbReference type="Ensembl" id="ENST00000264220.6">
    <property type="protein sequence ID" value="ENSP00000264220.2"/>
    <property type="gene ID" value="ENSG00000128059.8"/>
</dbReference>
<dbReference type="GeneID" id="5471"/>
<dbReference type="KEGG" id="hsa:5471"/>
<dbReference type="MANE-Select" id="ENST00000264220.6">
    <property type="protein sequence ID" value="ENSP00000264220.2"/>
    <property type="RefSeq nucleotide sequence ID" value="NM_002703.5"/>
    <property type="RefSeq protein sequence ID" value="NP_002694.3"/>
</dbReference>
<dbReference type="UCSC" id="uc003hbr.4">
    <property type="organism name" value="human"/>
</dbReference>
<dbReference type="AGR" id="HGNC:9238"/>
<dbReference type="CTD" id="5471"/>
<dbReference type="DisGeNET" id="5471"/>
<dbReference type="GeneCards" id="PPAT"/>
<dbReference type="HGNC" id="HGNC:9238">
    <property type="gene designation" value="PPAT"/>
</dbReference>
<dbReference type="HPA" id="ENSG00000128059">
    <property type="expression patterns" value="Low tissue specificity"/>
</dbReference>
<dbReference type="MalaCards" id="PPAT"/>
<dbReference type="MIM" id="172450">
    <property type="type" value="gene"/>
</dbReference>
<dbReference type="neXtProt" id="NX_Q06203"/>
<dbReference type="OpenTargets" id="ENSG00000128059"/>
<dbReference type="PharmGKB" id="PA33559"/>
<dbReference type="VEuPathDB" id="HostDB:ENSG00000128059"/>
<dbReference type="eggNOG" id="KOG0572">
    <property type="taxonomic scope" value="Eukaryota"/>
</dbReference>
<dbReference type="GeneTree" id="ENSGT00390000003428"/>
<dbReference type="HOGENOM" id="CLU_022389_3_1_1"/>
<dbReference type="InParanoid" id="Q06203"/>
<dbReference type="OMA" id="IRHFGVK"/>
<dbReference type="OrthoDB" id="191723at2759"/>
<dbReference type="PAN-GO" id="Q06203">
    <property type="GO annotations" value="2 GO annotations based on evolutionary models"/>
</dbReference>
<dbReference type="PhylomeDB" id="Q06203"/>
<dbReference type="TreeFam" id="TF106370"/>
<dbReference type="BioCyc" id="MetaCyc:HS05157-MONOMER"/>
<dbReference type="BRENDA" id="2.4.2.14">
    <property type="organism ID" value="2681"/>
</dbReference>
<dbReference type="BRENDA" id="2.7.7.3">
    <property type="organism ID" value="2681"/>
</dbReference>
<dbReference type="PathwayCommons" id="Q06203"/>
<dbReference type="Reactome" id="R-HSA-73817">
    <property type="pathway name" value="Purine ribonucleoside monophosphate biosynthesis"/>
</dbReference>
<dbReference type="SignaLink" id="Q06203"/>
<dbReference type="SIGNOR" id="Q06203"/>
<dbReference type="UniPathway" id="UPA00074">
    <property type="reaction ID" value="UER00124"/>
</dbReference>
<dbReference type="BioGRID-ORCS" id="5471">
    <property type="hits" value="338 hits in 1181 CRISPR screens"/>
</dbReference>
<dbReference type="ChiTaRS" id="PPAT">
    <property type="organism name" value="human"/>
</dbReference>
<dbReference type="GeneWiki" id="Amidophosphoribosyltransferase"/>
<dbReference type="GenomeRNAi" id="5471"/>
<dbReference type="Pharos" id="Q06203">
    <property type="development level" value="Tclin"/>
</dbReference>
<dbReference type="PRO" id="PR:Q06203"/>
<dbReference type="Proteomes" id="UP000005640">
    <property type="component" value="Chromosome 4"/>
</dbReference>
<dbReference type="RNAct" id="Q06203">
    <property type="molecule type" value="protein"/>
</dbReference>
<dbReference type="Bgee" id="ENSG00000128059">
    <property type="expression patterns" value="Expressed in ventricular zone and 149 other cell types or tissues"/>
</dbReference>
<dbReference type="ExpressionAtlas" id="Q06203">
    <property type="expression patterns" value="baseline and differential"/>
</dbReference>
<dbReference type="GO" id="GO:0005829">
    <property type="term" value="C:cytosol"/>
    <property type="evidence" value="ECO:0000304"/>
    <property type="project" value="Reactome"/>
</dbReference>
<dbReference type="GO" id="GO:0051539">
    <property type="term" value="F:4 iron, 4 sulfur cluster binding"/>
    <property type="evidence" value="ECO:0007669"/>
    <property type="project" value="UniProtKB-KW"/>
</dbReference>
<dbReference type="GO" id="GO:0004044">
    <property type="term" value="F:amidophosphoribosyltransferase activity"/>
    <property type="evidence" value="ECO:0000318"/>
    <property type="project" value="GO_Central"/>
</dbReference>
<dbReference type="GO" id="GO:0046872">
    <property type="term" value="F:metal ion binding"/>
    <property type="evidence" value="ECO:0007669"/>
    <property type="project" value="UniProtKB-KW"/>
</dbReference>
<dbReference type="GO" id="GO:0044208">
    <property type="term" value="P:'de novo' AMP biosynthetic process"/>
    <property type="evidence" value="ECO:0007669"/>
    <property type="project" value="Ensembl"/>
</dbReference>
<dbReference type="GO" id="GO:0006189">
    <property type="term" value="P:'de novo' IMP biosynthetic process"/>
    <property type="evidence" value="ECO:0007669"/>
    <property type="project" value="UniProtKB-UniPathway"/>
</dbReference>
<dbReference type="GO" id="GO:0097294">
    <property type="term" value="P:'de novo' XMP biosynthetic process"/>
    <property type="evidence" value="ECO:0007669"/>
    <property type="project" value="Ensembl"/>
</dbReference>
<dbReference type="GO" id="GO:0006177">
    <property type="term" value="P:GMP biosynthetic process"/>
    <property type="evidence" value="ECO:0007669"/>
    <property type="project" value="Ensembl"/>
</dbReference>
<dbReference type="GO" id="GO:0009113">
    <property type="term" value="P:purine nucleobase biosynthetic process"/>
    <property type="evidence" value="ECO:0007669"/>
    <property type="project" value="InterPro"/>
</dbReference>
<dbReference type="GO" id="GO:0006164">
    <property type="term" value="P:purine nucleotide biosynthetic process"/>
    <property type="evidence" value="ECO:0000318"/>
    <property type="project" value="GO_Central"/>
</dbReference>
<dbReference type="CDD" id="cd00715">
    <property type="entry name" value="GPATase_N"/>
    <property type="match status" value="1"/>
</dbReference>
<dbReference type="CDD" id="cd06223">
    <property type="entry name" value="PRTases_typeI"/>
    <property type="match status" value="1"/>
</dbReference>
<dbReference type="FunFam" id="3.60.20.10:FF:000047">
    <property type="entry name" value="Amidophosphoribosyltransferase"/>
    <property type="match status" value="1"/>
</dbReference>
<dbReference type="Gene3D" id="3.40.50.2020">
    <property type="match status" value="1"/>
</dbReference>
<dbReference type="Gene3D" id="3.60.20.10">
    <property type="entry name" value="Glutamine Phosphoribosylpyrophosphate, subunit 1, domain 1"/>
    <property type="match status" value="1"/>
</dbReference>
<dbReference type="HAMAP" id="MF_01931">
    <property type="entry name" value="PurF"/>
    <property type="match status" value="1"/>
</dbReference>
<dbReference type="InterPro" id="IPR017932">
    <property type="entry name" value="GATase_2_dom"/>
</dbReference>
<dbReference type="InterPro" id="IPR029055">
    <property type="entry name" value="Ntn_hydrolases_N"/>
</dbReference>
<dbReference type="InterPro" id="IPR000836">
    <property type="entry name" value="PRibTrfase_dom"/>
</dbReference>
<dbReference type="InterPro" id="IPR029057">
    <property type="entry name" value="PRTase-like"/>
</dbReference>
<dbReference type="InterPro" id="IPR005854">
    <property type="entry name" value="PurF"/>
</dbReference>
<dbReference type="InterPro" id="IPR035584">
    <property type="entry name" value="PurF_N"/>
</dbReference>
<dbReference type="NCBIfam" id="TIGR01134">
    <property type="entry name" value="purF"/>
    <property type="match status" value="1"/>
</dbReference>
<dbReference type="PANTHER" id="PTHR11907">
    <property type="entry name" value="AMIDOPHOSPHORIBOSYLTRANSFERASE"/>
    <property type="match status" value="1"/>
</dbReference>
<dbReference type="Pfam" id="PF13522">
    <property type="entry name" value="GATase_6"/>
    <property type="match status" value="1"/>
</dbReference>
<dbReference type="Pfam" id="PF00156">
    <property type="entry name" value="Pribosyltran"/>
    <property type="match status" value="1"/>
</dbReference>
<dbReference type="PIRSF" id="PIRSF000485">
    <property type="entry name" value="Amd_phspho_trans"/>
    <property type="match status" value="1"/>
</dbReference>
<dbReference type="SUPFAM" id="SSF56235">
    <property type="entry name" value="N-terminal nucleophile aminohydrolases (Ntn hydrolases)"/>
    <property type="match status" value="1"/>
</dbReference>
<dbReference type="SUPFAM" id="SSF53271">
    <property type="entry name" value="PRTase-like"/>
    <property type="match status" value="1"/>
</dbReference>
<dbReference type="PROSITE" id="PS51278">
    <property type="entry name" value="GATASE_TYPE_2"/>
    <property type="match status" value="1"/>
</dbReference>
<dbReference type="PROSITE" id="PS00103">
    <property type="entry name" value="PUR_PYR_PR_TRANSFER"/>
    <property type="match status" value="1"/>
</dbReference>
<sequence>MELEELGIREECGVFGCIASGEWPTQLDVPHVITLGLVGLQHRGQESAGIVTSDGSSVPTFKSHKGMGLVNHVFTEDNLKKLYVSNLGIGHTRYATTGKCELENCQPFVVETLHGKIAVAHNGELVNAARLRKKLLRHGIGLSTSSDSEMITQLLAYTPPQEQDDTPDWVARIKNLMKEAPTAYSLLIMHRDVIYAVRDPYGNRPLCIGRLIPVSDINDKEKKTSETEGWVVSSESCSFLSIGARYYREVLPGEIVEISRHNVQTLDIISRSEGNPVAFCIFEYVYFARPDSMFEDQMVYTVRYRCGQQLAIEAPVDADLVSTVPESATPAALAYAGKCGLPYVEVLCKNRYVGRTFIQPNMRLRQLGVAKKFGVLSDNFKGKRIVLVDDSIVRGNTISPIIKLLKESGAKEVHIRVASPPIKYPCFMGINIPTKEELIANKPEFDHLAEYLGANSVVYLSVEGLVSSVQEGIKFKKQKEKKHDIMIQENGNGLECFEKSGHCTACLTGKYPVELEW</sequence>